<gene>
    <name evidence="1" type="primary">rpsQ</name>
    <name evidence="1" type="synonym">rps17</name>
    <name type="ordered locus">syc1874_d</name>
</gene>
<dbReference type="EMBL" id="AB000111">
    <property type="protein sequence ID" value="BAA22458.1"/>
    <property type="molecule type" value="Genomic_DNA"/>
</dbReference>
<dbReference type="EMBL" id="AP008231">
    <property type="protein sequence ID" value="BAD80064.1"/>
    <property type="molecule type" value="Genomic_DNA"/>
</dbReference>
<dbReference type="RefSeq" id="WP_011244184.1">
    <property type="nucleotide sequence ID" value="NZ_CP085785.1"/>
</dbReference>
<dbReference type="SMR" id="O24698"/>
<dbReference type="GeneID" id="72431106"/>
<dbReference type="KEGG" id="syc:syc1874_d"/>
<dbReference type="eggNOG" id="COG0186">
    <property type="taxonomic scope" value="Bacteria"/>
</dbReference>
<dbReference type="Proteomes" id="UP000001175">
    <property type="component" value="Chromosome"/>
</dbReference>
<dbReference type="GO" id="GO:0022627">
    <property type="term" value="C:cytosolic small ribosomal subunit"/>
    <property type="evidence" value="ECO:0007669"/>
    <property type="project" value="TreeGrafter"/>
</dbReference>
<dbReference type="GO" id="GO:0019843">
    <property type="term" value="F:rRNA binding"/>
    <property type="evidence" value="ECO:0007669"/>
    <property type="project" value="UniProtKB-UniRule"/>
</dbReference>
<dbReference type="GO" id="GO:0003735">
    <property type="term" value="F:structural constituent of ribosome"/>
    <property type="evidence" value="ECO:0007669"/>
    <property type="project" value="InterPro"/>
</dbReference>
<dbReference type="GO" id="GO:0006412">
    <property type="term" value="P:translation"/>
    <property type="evidence" value="ECO:0007669"/>
    <property type="project" value="UniProtKB-UniRule"/>
</dbReference>
<dbReference type="CDD" id="cd00364">
    <property type="entry name" value="Ribosomal_uS17"/>
    <property type="match status" value="1"/>
</dbReference>
<dbReference type="Gene3D" id="2.40.50.140">
    <property type="entry name" value="Nucleic acid-binding proteins"/>
    <property type="match status" value="1"/>
</dbReference>
<dbReference type="HAMAP" id="MF_01345_B">
    <property type="entry name" value="Ribosomal_uS17_B"/>
    <property type="match status" value="1"/>
</dbReference>
<dbReference type="InterPro" id="IPR012340">
    <property type="entry name" value="NA-bd_OB-fold"/>
</dbReference>
<dbReference type="InterPro" id="IPR000266">
    <property type="entry name" value="Ribosomal_uS17"/>
</dbReference>
<dbReference type="InterPro" id="IPR019984">
    <property type="entry name" value="Ribosomal_uS17_bact/chlr"/>
</dbReference>
<dbReference type="InterPro" id="IPR019979">
    <property type="entry name" value="Ribosomal_uS17_CS"/>
</dbReference>
<dbReference type="NCBIfam" id="NF004123">
    <property type="entry name" value="PRK05610.1"/>
    <property type="match status" value="1"/>
</dbReference>
<dbReference type="NCBIfam" id="TIGR03635">
    <property type="entry name" value="uS17_bact"/>
    <property type="match status" value="1"/>
</dbReference>
<dbReference type="PANTHER" id="PTHR10744">
    <property type="entry name" value="40S RIBOSOMAL PROTEIN S11 FAMILY MEMBER"/>
    <property type="match status" value="1"/>
</dbReference>
<dbReference type="PANTHER" id="PTHR10744:SF1">
    <property type="entry name" value="SMALL RIBOSOMAL SUBUNIT PROTEIN US17M"/>
    <property type="match status" value="1"/>
</dbReference>
<dbReference type="Pfam" id="PF00366">
    <property type="entry name" value="Ribosomal_S17"/>
    <property type="match status" value="1"/>
</dbReference>
<dbReference type="PRINTS" id="PR00973">
    <property type="entry name" value="RIBOSOMALS17"/>
</dbReference>
<dbReference type="SUPFAM" id="SSF50249">
    <property type="entry name" value="Nucleic acid-binding proteins"/>
    <property type="match status" value="1"/>
</dbReference>
<dbReference type="PROSITE" id="PS00056">
    <property type="entry name" value="RIBOSOMAL_S17"/>
    <property type="match status" value="1"/>
</dbReference>
<accession>O24698</accession>
<sequence>MAVKERVGVVVSDKMDKTVVVAIEDRTAHPKYGKIVVRTKRYKAHDEDNRAKTGDRVRIQETRPLSRTKRWTVAEILESVGA</sequence>
<feature type="chain" id="PRO_0000128488" description="Small ribosomal subunit protein uS17">
    <location>
        <begin position="1"/>
        <end position="82"/>
    </location>
</feature>
<organism>
    <name type="scientific">Synechococcus sp. (strain ATCC 27144 / PCC 6301 / SAUG 1402/1)</name>
    <name type="common">Anacystis nidulans</name>
    <dbReference type="NCBI Taxonomy" id="269084"/>
    <lineage>
        <taxon>Bacteria</taxon>
        <taxon>Bacillati</taxon>
        <taxon>Cyanobacteriota</taxon>
        <taxon>Cyanophyceae</taxon>
        <taxon>Synechococcales</taxon>
        <taxon>Synechococcaceae</taxon>
        <taxon>Synechococcus</taxon>
    </lineage>
</organism>
<reference key="1">
    <citation type="journal article" date="1997" name="Gene">
        <title>Organization of a large gene cluster encoding ribosomal proteins in the cyanobacterium Synechococcus sp. strain PCC 6301: comparison of gene clusters among cyanobacteria, eubacteria and chloroplast genomes.</title>
        <authorList>
            <person name="Sugita M."/>
            <person name="Sugishita H."/>
            <person name="Fujishiro T."/>
            <person name="Tsuboi M."/>
            <person name="Sugita C."/>
            <person name="Endo T."/>
            <person name="Sugiura M."/>
        </authorList>
    </citation>
    <scope>NUCLEOTIDE SEQUENCE [GENOMIC DNA]</scope>
</reference>
<reference key="2">
    <citation type="journal article" date="2007" name="Photosyn. Res.">
        <title>Complete nucleotide sequence of the freshwater unicellular cyanobacterium Synechococcus elongatus PCC 6301 chromosome: gene content and organization.</title>
        <authorList>
            <person name="Sugita C."/>
            <person name="Ogata K."/>
            <person name="Shikata M."/>
            <person name="Jikuya H."/>
            <person name="Takano J."/>
            <person name="Furumichi M."/>
            <person name="Kanehisa M."/>
            <person name="Omata T."/>
            <person name="Sugiura M."/>
            <person name="Sugita M."/>
        </authorList>
    </citation>
    <scope>NUCLEOTIDE SEQUENCE [LARGE SCALE GENOMIC DNA]</scope>
    <source>
        <strain>ATCC 27144 / PCC 6301 / SAUG 1402/1</strain>
    </source>
</reference>
<name>RS17_SYNP6</name>
<keyword id="KW-0687">Ribonucleoprotein</keyword>
<keyword id="KW-0689">Ribosomal protein</keyword>
<keyword id="KW-0694">RNA-binding</keyword>
<keyword id="KW-0699">rRNA-binding</keyword>
<evidence type="ECO:0000255" key="1">
    <source>
        <dbReference type="HAMAP-Rule" id="MF_01345"/>
    </source>
</evidence>
<evidence type="ECO:0000305" key="2"/>
<protein>
    <recommendedName>
        <fullName evidence="1">Small ribosomal subunit protein uS17</fullName>
    </recommendedName>
    <alternativeName>
        <fullName evidence="2">30S ribosomal protein S17</fullName>
    </alternativeName>
</protein>
<comment type="function">
    <text evidence="1">One of the primary rRNA binding proteins, it binds specifically to the 5'-end of 16S ribosomal RNA.</text>
</comment>
<comment type="subunit">
    <text evidence="1">Part of the 30S ribosomal subunit.</text>
</comment>
<comment type="similarity">
    <text evidence="1">Belongs to the universal ribosomal protein uS17 family.</text>
</comment>
<proteinExistence type="inferred from homology"/>